<dbReference type="EMBL" id="CP000789">
    <property type="protein sequence ID" value="ABU70364.1"/>
    <property type="molecule type" value="Genomic_DNA"/>
</dbReference>
<dbReference type="RefSeq" id="WP_012127285.1">
    <property type="nucleotide sequence ID" value="NC_022269.1"/>
</dbReference>
<dbReference type="SMR" id="A7MT10"/>
<dbReference type="KEGG" id="vha:VIBHAR_01387"/>
<dbReference type="PATRIC" id="fig|338187.36.peg.1311"/>
<dbReference type="Proteomes" id="UP000008152">
    <property type="component" value="Chromosome I"/>
</dbReference>
<dbReference type="Gene3D" id="3.10.510.20">
    <property type="entry name" value="YcgL domain"/>
    <property type="match status" value="1"/>
</dbReference>
<dbReference type="HAMAP" id="MF_01866">
    <property type="entry name" value="UPF0745"/>
    <property type="match status" value="1"/>
</dbReference>
<dbReference type="InterPro" id="IPR038068">
    <property type="entry name" value="YcgL-like_sf"/>
</dbReference>
<dbReference type="InterPro" id="IPR027354">
    <property type="entry name" value="YcgL_dom"/>
</dbReference>
<dbReference type="PANTHER" id="PTHR38109">
    <property type="entry name" value="PROTEIN YCGL"/>
    <property type="match status" value="1"/>
</dbReference>
<dbReference type="PANTHER" id="PTHR38109:SF1">
    <property type="entry name" value="PROTEIN YCGL"/>
    <property type="match status" value="1"/>
</dbReference>
<dbReference type="Pfam" id="PF05166">
    <property type="entry name" value="YcgL"/>
    <property type="match status" value="1"/>
</dbReference>
<dbReference type="SUPFAM" id="SSF160191">
    <property type="entry name" value="YcgL-like"/>
    <property type="match status" value="1"/>
</dbReference>
<dbReference type="PROSITE" id="PS51648">
    <property type="entry name" value="YCGL"/>
    <property type="match status" value="1"/>
</dbReference>
<protein>
    <recommendedName>
        <fullName evidence="1">YcgL domain-containing protein VIBHAR_01387</fullName>
    </recommendedName>
</protein>
<reference key="1">
    <citation type="submission" date="2007-08" db="EMBL/GenBank/DDBJ databases">
        <authorList>
            <consortium name="The Vibrio harveyi Genome Sequencing Project"/>
            <person name="Bassler B."/>
            <person name="Clifton S.W."/>
            <person name="Fulton L."/>
            <person name="Delehaunty K."/>
            <person name="Fronick C."/>
            <person name="Harrison M."/>
            <person name="Markivic C."/>
            <person name="Fulton R."/>
            <person name="Tin-Wollam A.-M."/>
            <person name="Shah N."/>
            <person name="Pepin K."/>
            <person name="Nash W."/>
            <person name="Thiruvilangam P."/>
            <person name="Bhonagiri V."/>
            <person name="Waters C."/>
            <person name="Tu K.C."/>
            <person name="Irgon J."/>
            <person name="Wilson R.K."/>
        </authorList>
    </citation>
    <scope>NUCLEOTIDE SEQUENCE [LARGE SCALE GENOMIC DNA]</scope>
    <source>
        <strain>ATCC BAA-1116 / BB120</strain>
    </source>
</reference>
<evidence type="ECO:0000255" key="1">
    <source>
        <dbReference type="HAMAP-Rule" id="MF_01866"/>
    </source>
</evidence>
<sequence>MLCSIYKSSRKEGTYLYIPKKDDFSQVPDTLMQMFGKPMPVMTIKLDGRTLAQVDVEKVKASLINDGFFLQVPPPPENLLEKYKEQKAQQKGE</sequence>
<gene>
    <name type="ordered locus">VIBHAR_01387</name>
</gene>
<accession>A7MT10</accession>
<organism>
    <name type="scientific">Vibrio campbellii (strain ATCC BAA-1116)</name>
    <dbReference type="NCBI Taxonomy" id="2902295"/>
    <lineage>
        <taxon>Bacteria</taxon>
        <taxon>Pseudomonadati</taxon>
        <taxon>Pseudomonadota</taxon>
        <taxon>Gammaproteobacteria</taxon>
        <taxon>Vibrionales</taxon>
        <taxon>Vibrionaceae</taxon>
        <taxon>Vibrio</taxon>
    </lineage>
</organism>
<name>Y1387_VIBC1</name>
<proteinExistence type="inferred from homology"/>
<feature type="chain" id="PRO_0000375397" description="YcgL domain-containing protein VIBHAR_01387">
    <location>
        <begin position="1"/>
        <end position="93"/>
    </location>
</feature>
<feature type="domain" description="YcgL" evidence="1">
    <location>
        <begin position="1"/>
        <end position="84"/>
    </location>
</feature>